<accession>Q8RFN7</accession>
<sequence>MKKIITDLDLNNKKVLMRVDFNVPMKDGKITDENRIVQALPTIKYVLEHNAKLILFSHLGKVKIEEDKATKSLKAVAEKLSELLGKNVTFIPETRGEKLESAINNLKSGEVLMFENTRFEDLDGKKESKNDSELGKYWASLGDVFVNDAFGTAHRAHASNVGIAENIGNGNSAVGFLVEKELKFIGEAVNNPKRPLIAILGGAKVSDKIGVIENLLTKADKILIGGAMMFTFLKAEGKNIGTSLVEDDKLDLAKDLLAKSNGKIVLPVDTVIASEFKNDIEFSTVDVDNIPNNKMGLDIGEKTVTLFDSYIKTAKTVVWNGPMGVFEMSNFAKGTIGVCESIANLTDAVTIIGGGDSAAAAISLGYADKFTHISTGGGASLEFLEGKVLPGVEAISNK</sequence>
<name>PGK_FUSNN</name>
<evidence type="ECO:0000255" key="1">
    <source>
        <dbReference type="HAMAP-Rule" id="MF_00145"/>
    </source>
</evidence>
<gene>
    <name evidence="1" type="primary">pgk</name>
    <name type="ordered locus">FN0654</name>
</gene>
<organism>
    <name type="scientific">Fusobacterium nucleatum subsp. nucleatum (strain ATCC 25586 / DSM 15643 / BCRC 10681 / CIP 101130 / JCM 8532 / KCTC 2640 / LMG 13131 / VPI 4355)</name>
    <dbReference type="NCBI Taxonomy" id="190304"/>
    <lineage>
        <taxon>Bacteria</taxon>
        <taxon>Fusobacteriati</taxon>
        <taxon>Fusobacteriota</taxon>
        <taxon>Fusobacteriia</taxon>
        <taxon>Fusobacteriales</taxon>
        <taxon>Fusobacteriaceae</taxon>
        <taxon>Fusobacterium</taxon>
    </lineage>
</organism>
<protein>
    <recommendedName>
        <fullName evidence="1">Phosphoglycerate kinase</fullName>
        <ecNumber evidence="1">2.7.2.3</ecNumber>
    </recommendedName>
</protein>
<proteinExistence type="inferred from homology"/>
<feature type="chain" id="PRO_0000145945" description="Phosphoglycerate kinase">
    <location>
        <begin position="1"/>
        <end position="398"/>
    </location>
</feature>
<feature type="binding site" evidence="1">
    <location>
        <begin position="20"/>
        <end position="22"/>
    </location>
    <ligand>
        <name>substrate</name>
    </ligand>
</feature>
<feature type="binding site" evidence="1">
    <location>
        <position position="35"/>
    </location>
    <ligand>
        <name>substrate</name>
    </ligand>
</feature>
<feature type="binding site" evidence="1">
    <location>
        <begin position="58"/>
        <end position="61"/>
    </location>
    <ligand>
        <name>substrate</name>
    </ligand>
</feature>
<feature type="binding site" evidence="1">
    <location>
        <position position="118"/>
    </location>
    <ligand>
        <name>substrate</name>
    </ligand>
</feature>
<feature type="binding site" evidence="1">
    <location>
        <position position="155"/>
    </location>
    <ligand>
        <name>substrate</name>
    </ligand>
</feature>
<feature type="binding site" evidence="1">
    <location>
        <position position="208"/>
    </location>
    <ligand>
        <name>ATP</name>
        <dbReference type="ChEBI" id="CHEBI:30616"/>
    </ligand>
</feature>
<feature type="binding site" evidence="1">
    <location>
        <position position="296"/>
    </location>
    <ligand>
        <name>ATP</name>
        <dbReference type="ChEBI" id="CHEBI:30616"/>
    </ligand>
</feature>
<feature type="binding site" evidence="1">
    <location>
        <position position="327"/>
    </location>
    <ligand>
        <name>ATP</name>
        <dbReference type="ChEBI" id="CHEBI:30616"/>
    </ligand>
</feature>
<feature type="binding site" evidence="1">
    <location>
        <begin position="354"/>
        <end position="357"/>
    </location>
    <ligand>
        <name>ATP</name>
        <dbReference type="ChEBI" id="CHEBI:30616"/>
    </ligand>
</feature>
<reference key="1">
    <citation type="journal article" date="2002" name="J. Bacteriol.">
        <title>Genome sequence and analysis of the oral bacterium Fusobacterium nucleatum strain ATCC 25586.</title>
        <authorList>
            <person name="Kapatral V."/>
            <person name="Anderson I."/>
            <person name="Ivanova N."/>
            <person name="Reznik G."/>
            <person name="Los T."/>
            <person name="Lykidis A."/>
            <person name="Bhattacharyya A."/>
            <person name="Bartman A."/>
            <person name="Gardner W."/>
            <person name="Grechkin G."/>
            <person name="Zhu L."/>
            <person name="Vasieva O."/>
            <person name="Chu L."/>
            <person name="Kogan Y."/>
            <person name="Chaga O."/>
            <person name="Goltsman E."/>
            <person name="Bernal A."/>
            <person name="Larsen N."/>
            <person name="D'Souza M."/>
            <person name="Walunas T."/>
            <person name="Pusch G."/>
            <person name="Haselkorn R."/>
            <person name="Fonstein M."/>
            <person name="Kyrpides N.C."/>
            <person name="Overbeek R."/>
        </authorList>
    </citation>
    <scope>NUCLEOTIDE SEQUENCE [LARGE SCALE GENOMIC DNA]</scope>
    <source>
        <strain>ATCC 25586 / DSM 15643 / BCRC 10681 / CIP 101130 / JCM 8532 / KCTC 2640 / LMG 13131 / VPI 4355</strain>
    </source>
</reference>
<keyword id="KW-0067">ATP-binding</keyword>
<keyword id="KW-0963">Cytoplasm</keyword>
<keyword id="KW-0324">Glycolysis</keyword>
<keyword id="KW-0418">Kinase</keyword>
<keyword id="KW-0547">Nucleotide-binding</keyword>
<keyword id="KW-1185">Reference proteome</keyword>
<keyword id="KW-0808">Transferase</keyword>
<dbReference type="EC" id="2.7.2.3" evidence="1"/>
<dbReference type="EMBL" id="AE009951">
    <property type="protein sequence ID" value="AAL94850.1"/>
    <property type="molecule type" value="Genomic_DNA"/>
</dbReference>
<dbReference type="RefSeq" id="NP_603551.1">
    <property type="nucleotide sequence ID" value="NC_003454.1"/>
</dbReference>
<dbReference type="RefSeq" id="WP_005902043.1">
    <property type="nucleotide sequence ID" value="NZ_OZ209243.1"/>
</dbReference>
<dbReference type="SMR" id="Q8RFN7"/>
<dbReference type="FunCoup" id="Q8RFN7">
    <property type="interactions" value="308"/>
</dbReference>
<dbReference type="STRING" id="190304.FN0654"/>
<dbReference type="PaxDb" id="190304-FN0654"/>
<dbReference type="EnsemblBacteria" id="AAL94850">
    <property type="protein sequence ID" value="AAL94850"/>
    <property type="gene ID" value="FN0654"/>
</dbReference>
<dbReference type="KEGG" id="fnu:FN0654"/>
<dbReference type="PATRIC" id="fig|190304.8.peg.1219"/>
<dbReference type="eggNOG" id="COG0126">
    <property type="taxonomic scope" value="Bacteria"/>
</dbReference>
<dbReference type="HOGENOM" id="CLU_025427_0_2_0"/>
<dbReference type="InParanoid" id="Q8RFN7"/>
<dbReference type="BioCyc" id="FNUC190304:G1FZS-1240-MONOMER"/>
<dbReference type="UniPathway" id="UPA00109">
    <property type="reaction ID" value="UER00185"/>
</dbReference>
<dbReference type="Proteomes" id="UP000002521">
    <property type="component" value="Chromosome"/>
</dbReference>
<dbReference type="GO" id="GO:0005829">
    <property type="term" value="C:cytosol"/>
    <property type="evidence" value="ECO:0000318"/>
    <property type="project" value="GO_Central"/>
</dbReference>
<dbReference type="GO" id="GO:0043531">
    <property type="term" value="F:ADP binding"/>
    <property type="evidence" value="ECO:0000318"/>
    <property type="project" value="GO_Central"/>
</dbReference>
<dbReference type="GO" id="GO:0005524">
    <property type="term" value="F:ATP binding"/>
    <property type="evidence" value="ECO:0000318"/>
    <property type="project" value="GO_Central"/>
</dbReference>
<dbReference type="GO" id="GO:0004618">
    <property type="term" value="F:phosphoglycerate kinase activity"/>
    <property type="evidence" value="ECO:0000318"/>
    <property type="project" value="GO_Central"/>
</dbReference>
<dbReference type="GO" id="GO:0006094">
    <property type="term" value="P:gluconeogenesis"/>
    <property type="evidence" value="ECO:0000318"/>
    <property type="project" value="GO_Central"/>
</dbReference>
<dbReference type="GO" id="GO:0006096">
    <property type="term" value="P:glycolytic process"/>
    <property type="evidence" value="ECO:0000318"/>
    <property type="project" value="GO_Central"/>
</dbReference>
<dbReference type="CDD" id="cd00318">
    <property type="entry name" value="Phosphoglycerate_kinase"/>
    <property type="match status" value="1"/>
</dbReference>
<dbReference type="FunFam" id="3.40.50.1260:FF:000001">
    <property type="entry name" value="Phosphoglycerate kinase"/>
    <property type="match status" value="1"/>
</dbReference>
<dbReference type="FunFam" id="3.40.50.1260:FF:000008">
    <property type="entry name" value="Phosphoglycerate kinase"/>
    <property type="match status" value="1"/>
</dbReference>
<dbReference type="Gene3D" id="3.40.50.1260">
    <property type="entry name" value="Phosphoglycerate kinase, N-terminal domain"/>
    <property type="match status" value="2"/>
</dbReference>
<dbReference type="HAMAP" id="MF_00145">
    <property type="entry name" value="Phosphoglyc_kinase"/>
    <property type="match status" value="1"/>
</dbReference>
<dbReference type="InterPro" id="IPR001576">
    <property type="entry name" value="Phosphoglycerate_kinase"/>
</dbReference>
<dbReference type="InterPro" id="IPR015911">
    <property type="entry name" value="Phosphoglycerate_kinase_CS"/>
</dbReference>
<dbReference type="InterPro" id="IPR015824">
    <property type="entry name" value="Phosphoglycerate_kinase_N"/>
</dbReference>
<dbReference type="InterPro" id="IPR036043">
    <property type="entry name" value="Phosphoglycerate_kinase_sf"/>
</dbReference>
<dbReference type="PANTHER" id="PTHR11406">
    <property type="entry name" value="PHOSPHOGLYCERATE KINASE"/>
    <property type="match status" value="1"/>
</dbReference>
<dbReference type="PANTHER" id="PTHR11406:SF23">
    <property type="entry name" value="PHOSPHOGLYCERATE KINASE 1, CHLOROPLASTIC-RELATED"/>
    <property type="match status" value="1"/>
</dbReference>
<dbReference type="Pfam" id="PF00162">
    <property type="entry name" value="PGK"/>
    <property type="match status" value="1"/>
</dbReference>
<dbReference type="PIRSF" id="PIRSF000724">
    <property type="entry name" value="Pgk"/>
    <property type="match status" value="1"/>
</dbReference>
<dbReference type="PRINTS" id="PR00477">
    <property type="entry name" value="PHGLYCKINASE"/>
</dbReference>
<dbReference type="SUPFAM" id="SSF53748">
    <property type="entry name" value="Phosphoglycerate kinase"/>
    <property type="match status" value="1"/>
</dbReference>
<dbReference type="PROSITE" id="PS00111">
    <property type="entry name" value="PGLYCERATE_KINASE"/>
    <property type="match status" value="1"/>
</dbReference>
<comment type="catalytic activity">
    <reaction evidence="1">
        <text>(2R)-3-phosphoglycerate + ATP = (2R)-3-phospho-glyceroyl phosphate + ADP</text>
        <dbReference type="Rhea" id="RHEA:14801"/>
        <dbReference type="ChEBI" id="CHEBI:30616"/>
        <dbReference type="ChEBI" id="CHEBI:57604"/>
        <dbReference type="ChEBI" id="CHEBI:58272"/>
        <dbReference type="ChEBI" id="CHEBI:456216"/>
        <dbReference type="EC" id="2.7.2.3"/>
    </reaction>
</comment>
<comment type="pathway">
    <text evidence="1">Carbohydrate degradation; glycolysis; pyruvate from D-glyceraldehyde 3-phosphate: step 2/5.</text>
</comment>
<comment type="subunit">
    <text evidence="1">Monomer.</text>
</comment>
<comment type="subcellular location">
    <subcellularLocation>
        <location evidence="1">Cytoplasm</location>
    </subcellularLocation>
</comment>
<comment type="similarity">
    <text evidence="1">Belongs to the phosphoglycerate kinase family.</text>
</comment>